<comment type="function">
    <text evidence="1">Necessary for the introduction of cis unsaturation into fatty acids. Catalyzes the dehydration of (3R)-3-hydroxydecanoyl-ACP to E-(2)-decenoyl-ACP and then its isomerization to Z-(3)-decenoyl-ACP. Can catalyze the dehydratase reaction for beta-hydroxyacyl-ACPs with saturated chain lengths up to 16:0, being most active on intermediate chain length.</text>
</comment>
<comment type="catalytic activity">
    <reaction evidence="1">
        <text>a (3R)-hydroxyacyl-[ACP] = a (2E)-enoyl-[ACP] + H2O</text>
        <dbReference type="Rhea" id="RHEA:13097"/>
        <dbReference type="Rhea" id="RHEA-COMP:9925"/>
        <dbReference type="Rhea" id="RHEA-COMP:9945"/>
        <dbReference type="ChEBI" id="CHEBI:15377"/>
        <dbReference type="ChEBI" id="CHEBI:78784"/>
        <dbReference type="ChEBI" id="CHEBI:78827"/>
        <dbReference type="EC" id="4.2.1.59"/>
    </reaction>
</comment>
<comment type="catalytic activity">
    <reaction evidence="1">
        <text>(3R)-hydroxydecanoyl-[ACP] = (2E)-decenoyl-[ACP] + H2O</text>
        <dbReference type="Rhea" id="RHEA:41860"/>
        <dbReference type="Rhea" id="RHEA-COMP:9638"/>
        <dbReference type="Rhea" id="RHEA-COMP:9639"/>
        <dbReference type="ChEBI" id="CHEBI:15377"/>
        <dbReference type="ChEBI" id="CHEBI:78466"/>
        <dbReference type="ChEBI" id="CHEBI:78467"/>
    </reaction>
</comment>
<comment type="catalytic activity">
    <reaction evidence="1">
        <text>(2E)-decenoyl-[ACP] = (3Z)-decenoyl-[ACP]</text>
        <dbReference type="Rhea" id="RHEA:23568"/>
        <dbReference type="Rhea" id="RHEA-COMP:9639"/>
        <dbReference type="Rhea" id="RHEA-COMP:9927"/>
        <dbReference type="ChEBI" id="CHEBI:78467"/>
        <dbReference type="ChEBI" id="CHEBI:78798"/>
        <dbReference type="EC" id="5.3.3.14"/>
    </reaction>
</comment>
<comment type="pathway">
    <text evidence="1">Lipid metabolism; fatty acid biosynthesis.</text>
</comment>
<comment type="subunit">
    <text evidence="1">Homodimer.</text>
</comment>
<comment type="subcellular location">
    <subcellularLocation>
        <location evidence="1">Cytoplasm</location>
    </subcellularLocation>
</comment>
<comment type="similarity">
    <text evidence="1">Belongs to the thioester dehydratase family. FabA subfamily.</text>
</comment>
<feature type="chain" id="PRO_1000201194" description="3-hydroxydecanoyl-[acyl-carrier-protein] dehydratase">
    <location>
        <begin position="1"/>
        <end position="171"/>
    </location>
</feature>
<feature type="active site" evidence="1">
    <location>
        <position position="70"/>
    </location>
</feature>
<name>FABA_PSEA8</name>
<keyword id="KW-0963">Cytoplasm</keyword>
<keyword id="KW-0275">Fatty acid biosynthesis</keyword>
<keyword id="KW-0276">Fatty acid metabolism</keyword>
<keyword id="KW-0413">Isomerase</keyword>
<keyword id="KW-0444">Lipid biosynthesis</keyword>
<keyword id="KW-0443">Lipid metabolism</keyword>
<keyword id="KW-0456">Lyase</keyword>
<reference key="1">
    <citation type="journal article" date="2009" name="Genome Res.">
        <title>Newly introduced genomic prophage islands are critical determinants of in vivo competitiveness in the Liverpool epidemic strain of Pseudomonas aeruginosa.</title>
        <authorList>
            <person name="Winstanley C."/>
            <person name="Langille M.G.I."/>
            <person name="Fothergill J.L."/>
            <person name="Kukavica-Ibrulj I."/>
            <person name="Paradis-Bleau C."/>
            <person name="Sanschagrin F."/>
            <person name="Thomson N.R."/>
            <person name="Winsor G.L."/>
            <person name="Quail M.A."/>
            <person name="Lennard N."/>
            <person name="Bignell A."/>
            <person name="Clarke L."/>
            <person name="Seeger K."/>
            <person name="Saunders D."/>
            <person name="Harris D."/>
            <person name="Parkhill J."/>
            <person name="Hancock R.E.W."/>
            <person name="Brinkman F.S.L."/>
            <person name="Levesque R.C."/>
        </authorList>
    </citation>
    <scope>NUCLEOTIDE SEQUENCE [LARGE SCALE GENOMIC DNA]</scope>
    <source>
        <strain>LESB58</strain>
    </source>
</reference>
<organism>
    <name type="scientific">Pseudomonas aeruginosa (strain LESB58)</name>
    <dbReference type="NCBI Taxonomy" id="557722"/>
    <lineage>
        <taxon>Bacteria</taxon>
        <taxon>Pseudomonadati</taxon>
        <taxon>Pseudomonadota</taxon>
        <taxon>Gammaproteobacteria</taxon>
        <taxon>Pseudomonadales</taxon>
        <taxon>Pseudomonadaceae</taxon>
        <taxon>Pseudomonas</taxon>
    </lineage>
</organism>
<proteinExistence type="inferred from homology"/>
<accession>B7UVB1</accession>
<gene>
    <name evidence="1" type="primary">fabA</name>
    <name type="ordered locus">PLES_37171</name>
</gene>
<sequence>MTKQHAFTREDLLRCSRGELFGPGNAQLPAPNMLMIDRIVHISDVGGKYGKGELVAELDINPDLWFFACHFEGDPVMPGCLGLDAMWQLVGFYLGWQGNPGRGRALGSGEVKFFGQVLPTAKKVTYNIHIKRTINRSLVLAIADGTVSVDGREIYSAEGLRVGLFTSTDSF</sequence>
<dbReference type="EC" id="4.2.1.59" evidence="1"/>
<dbReference type="EC" id="5.3.3.14" evidence="1"/>
<dbReference type="EMBL" id="FM209186">
    <property type="protein sequence ID" value="CAW28444.1"/>
    <property type="molecule type" value="Genomic_DNA"/>
</dbReference>
<dbReference type="RefSeq" id="WP_003087475.1">
    <property type="nucleotide sequence ID" value="NC_011770.1"/>
</dbReference>
<dbReference type="SMR" id="B7UVB1"/>
<dbReference type="GeneID" id="77221769"/>
<dbReference type="KEGG" id="pag:PLES_37171"/>
<dbReference type="HOGENOM" id="CLU_097925_0_0_6"/>
<dbReference type="UniPathway" id="UPA00094"/>
<dbReference type="GO" id="GO:0005737">
    <property type="term" value="C:cytoplasm"/>
    <property type="evidence" value="ECO:0007669"/>
    <property type="project" value="UniProtKB-SubCell"/>
</dbReference>
<dbReference type="GO" id="GO:0019171">
    <property type="term" value="F:(3R)-hydroxyacyl-[acyl-carrier-protein] dehydratase activity"/>
    <property type="evidence" value="ECO:0007669"/>
    <property type="project" value="UniProtKB-UniRule"/>
</dbReference>
<dbReference type="GO" id="GO:0034017">
    <property type="term" value="F:trans-2-decenoyl-acyl-carrier-protein isomerase activity"/>
    <property type="evidence" value="ECO:0007669"/>
    <property type="project" value="UniProtKB-UniRule"/>
</dbReference>
<dbReference type="GO" id="GO:0006636">
    <property type="term" value="P:unsaturated fatty acid biosynthetic process"/>
    <property type="evidence" value="ECO:0007669"/>
    <property type="project" value="UniProtKB-UniRule"/>
</dbReference>
<dbReference type="CDD" id="cd01287">
    <property type="entry name" value="FabA"/>
    <property type="match status" value="1"/>
</dbReference>
<dbReference type="FunFam" id="3.10.129.10:FF:000003">
    <property type="entry name" value="3-hydroxydecanoyl-[acyl-carrier-protein] dehydratase"/>
    <property type="match status" value="1"/>
</dbReference>
<dbReference type="Gene3D" id="3.10.129.10">
    <property type="entry name" value="Hotdog Thioesterase"/>
    <property type="match status" value="1"/>
</dbReference>
<dbReference type="HAMAP" id="MF_00405">
    <property type="entry name" value="FabA"/>
    <property type="match status" value="1"/>
</dbReference>
<dbReference type="InterPro" id="IPR010083">
    <property type="entry name" value="FabA"/>
</dbReference>
<dbReference type="InterPro" id="IPR013114">
    <property type="entry name" value="FabA_FabZ"/>
</dbReference>
<dbReference type="InterPro" id="IPR029069">
    <property type="entry name" value="HotDog_dom_sf"/>
</dbReference>
<dbReference type="NCBIfam" id="TIGR01749">
    <property type="entry name" value="fabA"/>
    <property type="match status" value="1"/>
</dbReference>
<dbReference type="NCBIfam" id="NF003509">
    <property type="entry name" value="PRK05174.1"/>
    <property type="match status" value="1"/>
</dbReference>
<dbReference type="PANTHER" id="PTHR30272">
    <property type="entry name" value="3-HYDROXYACYL-[ACYL-CARRIER-PROTEIN] DEHYDRATASE"/>
    <property type="match status" value="1"/>
</dbReference>
<dbReference type="PANTHER" id="PTHR30272:SF8">
    <property type="entry name" value="3-HYDROXYDECANOYL-[ACYL-CARRIER-PROTEIN] DEHYDRATASE"/>
    <property type="match status" value="1"/>
</dbReference>
<dbReference type="Pfam" id="PF07977">
    <property type="entry name" value="FabA"/>
    <property type="match status" value="1"/>
</dbReference>
<dbReference type="SUPFAM" id="SSF54637">
    <property type="entry name" value="Thioesterase/thiol ester dehydrase-isomerase"/>
    <property type="match status" value="1"/>
</dbReference>
<protein>
    <recommendedName>
        <fullName evidence="1">3-hydroxydecanoyl-[acyl-carrier-protein] dehydratase</fullName>
        <ecNumber evidence="1">4.2.1.59</ecNumber>
    </recommendedName>
    <alternativeName>
        <fullName evidence="1">3-hydroxyacyl-[acyl-carrier-protein] dehydratase FabA</fullName>
    </alternativeName>
    <alternativeName>
        <fullName evidence="1">Beta-hydroxydecanoyl thioester dehydrase</fullName>
    </alternativeName>
    <alternativeName>
        <fullName evidence="1">Trans-2-decenoyl-[acyl-carrier-protein] isomerase</fullName>
        <ecNumber evidence="1">5.3.3.14</ecNumber>
    </alternativeName>
</protein>
<evidence type="ECO:0000255" key="1">
    <source>
        <dbReference type="HAMAP-Rule" id="MF_00405"/>
    </source>
</evidence>